<evidence type="ECO:0000255" key="1">
    <source>
        <dbReference type="HAMAP-Rule" id="MF_00183"/>
    </source>
</evidence>
<keyword id="KW-0414">Isoprene biosynthesis</keyword>
<keyword id="KW-0464">Manganese</keyword>
<keyword id="KW-0479">Metal-binding</keyword>
<keyword id="KW-0521">NADP</keyword>
<keyword id="KW-0560">Oxidoreductase</keyword>
<dbReference type="EC" id="1.1.1.267" evidence="1"/>
<dbReference type="EMBL" id="CP000521">
    <property type="protein sequence ID" value="ABO12398.2"/>
    <property type="molecule type" value="Genomic_DNA"/>
</dbReference>
<dbReference type="SMR" id="A3M654"/>
<dbReference type="KEGG" id="acb:A1S_1971"/>
<dbReference type="HOGENOM" id="CLU_035714_4_0_6"/>
<dbReference type="UniPathway" id="UPA00056">
    <property type="reaction ID" value="UER00092"/>
</dbReference>
<dbReference type="GO" id="GO:0030604">
    <property type="term" value="F:1-deoxy-D-xylulose-5-phosphate reductoisomerase activity"/>
    <property type="evidence" value="ECO:0007669"/>
    <property type="project" value="UniProtKB-UniRule"/>
</dbReference>
<dbReference type="GO" id="GO:0030145">
    <property type="term" value="F:manganese ion binding"/>
    <property type="evidence" value="ECO:0007669"/>
    <property type="project" value="TreeGrafter"/>
</dbReference>
<dbReference type="GO" id="GO:0070402">
    <property type="term" value="F:NADPH binding"/>
    <property type="evidence" value="ECO:0007669"/>
    <property type="project" value="InterPro"/>
</dbReference>
<dbReference type="GO" id="GO:0051484">
    <property type="term" value="P:isopentenyl diphosphate biosynthetic process, methylerythritol 4-phosphate pathway involved in terpenoid biosynthetic process"/>
    <property type="evidence" value="ECO:0007669"/>
    <property type="project" value="TreeGrafter"/>
</dbReference>
<dbReference type="FunFam" id="3.40.50.720:FF:000045">
    <property type="entry name" value="1-deoxy-D-xylulose 5-phosphate reductoisomerase"/>
    <property type="match status" value="1"/>
</dbReference>
<dbReference type="Gene3D" id="1.10.1740.10">
    <property type="match status" value="1"/>
</dbReference>
<dbReference type="Gene3D" id="3.40.50.720">
    <property type="entry name" value="NAD(P)-binding Rossmann-like Domain"/>
    <property type="match status" value="1"/>
</dbReference>
<dbReference type="HAMAP" id="MF_00183">
    <property type="entry name" value="DXP_reductoisom"/>
    <property type="match status" value="1"/>
</dbReference>
<dbReference type="InterPro" id="IPR003821">
    <property type="entry name" value="DXP_reductoisomerase"/>
</dbReference>
<dbReference type="InterPro" id="IPR013644">
    <property type="entry name" value="DXP_reductoisomerase_C"/>
</dbReference>
<dbReference type="InterPro" id="IPR013512">
    <property type="entry name" value="DXP_reductoisomerase_N"/>
</dbReference>
<dbReference type="InterPro" id="IPR026877">
    <property type="entry name" value="DXPR_C"/>
</dbReference>
<dbReference type="InterPro" id="IPR036169">
    <property type="entry name" value="DXPR_C_sf"/>
</dbReference>
<dbReference type="InterPro" id="IPR036291">
    <property type="entry name" value="NAD(P)-bd_dom_sf"/>
</dbReference>
<dbReference type="NCBIfam" id="TIGR00243">
    <property type="entry name" value="Dxr"/>
    <property type="match status" value="1"/>
</dbReference>
<dbReference type="NCBIfam" id="NF003938">
    <property type="entry name" value="PRK05447.1-1"/>
    <property type="match status" value="1"/>
</dbReference>
<dbReference type="NCBIfam" id="NF009114">
    <property type="entry name" value="PRK12464.1"/>
    <property type="match status" value="1"/>
</dbReference>
<dbReference type="PANTHER" id="PTHR30525">
    <property type="entry name" value="1-DEOXY-D-XYLULOSE 5-PHOSPHATE REDUCTOISOMERASE"/>
    <property type="match status" value="1"/>
</dbReference>
<dbReference type="PANTHER" id="PTHR30525:SF0">
    <property type="entry name" value="1-DEOXY-D-XYLULOSE 5-PHOSPHATE REDUCTOISOMERASE, CHLOROPLASTIC"/>
    <property type="match status" value="1"/>
</dbReference>
<dbReference type="Pfam" id="PF08436">
    <property type="entry name" value="DXP_redisom_C"/>
    <property type="match status" value="1"/>
</dbReference>
<dbReference type="Pfam" id="PF02670">
    <property type="entry name" value="DXP_reductoisom"/>
    <property type="match status" value="1"/>
</dbReference>
<dbReference type="Pfam" id="PF13288">
    <property type="entry name" value="DXPR_C"/>
    <property type="match status" value="1"/>
</dbReference>
<dbReference type="PIRSF" id="PIRSF006205">
    <property type="entry name" value="Dxp_reductismrs"/>
    <property type="match status" value="1"/>
</dbReference>
<dbReference type="SUPFAM" id="SSF69055">
    <property type="entry name" value="1-deoxy-D-xylulose-5-phosphate reductoisomerase, C-terminal domain"/>
    <property type="match status" value="1"/>
</dbReference>
<dbReference type="SUPFAM" id="SSF55347">
    <property type="entry name" value="Glyceraldehyde-3-phosphate dehydrogenase-like, C-terminal domain"/>
    <property type="match status" value="1"/>
</dbReference>
<dbReference type="SUPFAM" id="SSF51735">
    <property type="entry name" value="NAD(P)-binding Rossmann-fold domains"/>
    <property type="match status" value="1"/>
</dbReference>
<accession>A3M654</accession>
<proteinExistence type="inferred from homology"/>
<organism>
    <name type="scientific">Acinetobacter baumannii (strain ATCC 17978 / DSM 105126 / CIP 53.77 / LMG 1025 / NCDC KC755 / 5377)</name>
    <dbReference type="NCBI Taxonomy" id="400667"/>
    <lineage>
        <taxon>Bacteria</taxon>
        <taxon>Pseudomonadati</taxon>
        <taxon>Pseudomonadota</taxon>
        <taxon>Gammaproteobacteria</taxon>
        <taxon>Moraxellales</taxon>
        <taxon>Moraxellaceae</taxon>
        <taxon>Acinetobacter</taxon>
        <taxon>Acinetobacter calcoaceticus/baumannii complex</taxon>
    </lineage>
</organism>
<name>DXR_ACIBT</name>
<feature type="chain" id="PRO_1000098469" description="1-deoxy-D-xylulose 5-phosphate reductoisomerase">
    <location>
        <begin position="1"/>
        <end position="398"/>
    </location>
</feature>
<feature type="binding site" evidence="1">
    <location>
        <position position="11"/>
    </location>
    <ligand>
        <name>NADPH</name>
        <dbReference type="ChEBI" id="CHEBI:57783"/>
    </ligand>
</feature>
<feature type="binding site" evidence="1">
    <location>
        <position position="12"/>
    </location>
    <ligand>
        <name>NADPH</name>
        <dbReference type="ChEBI" id="CHEBI:57783"/>
    </ligand>
</feature>
<feature type="binding site" evidence="1">
    <location>
        <position position="13"/>
    </location>
    <ligand>
        <name>NADPH</name>
        <dbReference type="ChEBI" id="CHEBI:57783"/>
    </ligand>
</feature>
<feature type="binding site" evidence="1">
    <location>
        <position position="14"/>
    </location>
    <ligand>
        <name>NADPH</name>
        <dbReference type="ChEBI" id="CHEBI:57783"/>
    </ligand>
</feature>
<feature type="binding site" evidence="1">
    <location>
        <position position="125"/>
    </location>
    <ligand>
        <name>NADPH</name>
        <dbReference type="ChEBI" id="CHEBI:57783"/>
    </ligand>
</feature>
<feature type="binding site" evidence="1">
    <location>
        <position position="126"/>
    </location>
    <ligand>
        <name>1-deoxy-D-xylulose 5-phosphate</name>
        <dbReference type="ChEBI" id="CHEBI:57792"/>
    </ligand>
</feature>
<feature type="binding site" evidence="1">
    <location>
        <position position="127"/>
    </location>
    <ligand>
        <name>NADPH</name>
        <dbReference type="ChEBI" id="CHEBI:57783"/>
    </ligand>
</feature>
<feature type="binding site" evidence="1">
    <location>
        <position position="151"/>
    </location>
    <ligand>
        <name>Mn(2+)</name>
        <dbReference type="ChEBI" id="CHEBI:29035"/>
    </ligand>
</feature>
<feature type="binding site" evidence="1">
    <location>
        <position position="152"/>
    </location>
    <ligand>
        <name>1-deoxy-D-xylulose 5-phosphate</name>
        <dbReference type="ChEBI" id="CHEBI:57792"/>
    </ligand>
</feature>
<feature type="binding site" evidence="1">
    <location>
        <position position="153"/>
    </location>
    <ligand>
        <name>1-deoxy-D-xylulose 5-phosphate</name>
        <dbReference type="ChEBI" id="CHEBI:57792"/>
    </ligand>
</feature>
<feature type="binding site" evidence="1">
    <location>
        <position position="153"/>
    </location>
    <ligand>
        <name>Mn(2+)</name>
        <dbReference type="ChEBI" id="CHEBI:29035"/>
    </ligand>
</feature>
<feature type="binding site" evidence="1">
    <location>
        <position position="186"/>
    </location>
    <ligand>
        <name>1-deoxy-D-xylulose 5-phosphate</name>
        <dbReference type="ChEBI" id="CHEBI:57792"/>
    </ligand>
</feature>
<feature type="binding site" evidence="1">
    <location>
        <position position="209"/>
    </location>
    <ligand>
        <name>1-deoxy-D-xylulose 5-phosphate</name>
        <dbReference type="ChEBI" id="CHEBI:57792"/>
    </ligand>
</feature>
<feature type="binding site" evidence="1">
    <location>
        <position position="215"/>
    </location>
    <ligand>
        <name>NADPH</name>
        <dbReference type="ChEBI" id="CHEBI:57783"/>
    </ligand>
</feature>
<feature type="binding site" evidence="1">
    <location>
        <position position="222"/>
    </location>
    <ligand>
        <name>1-deoxy-D-xylulose 5-phosphate</name>
        <dbReference type="ChEBI" id="CHEBI:57792"/>
    </ligand>
</feature>
<feature type="binding site" evidence="1">
    <location>
        <position position="227"/>
    </location>
    <ligand>
        <name>1-deoxy-D-xylulose 5-phosphate</name>
        <dbReference type="ChEBI" id="CHEBI:57792"/>
    </ligand>
</feature>
<feature type="binding site" evidence="1">
    <location>
        <position position="228"/>
    </location>
    <ligand>
        <name>1-deoxy-D-xylulose 5-phosphate</name>
        <dbReference type="ChEBI" id="CHEBI:57792"/>
    </ligand>
</feature>
<feature type="binding site" evidence="1">
    <location>
        <position position="231"/>
    </location>
    <ligand>
        <name>1-deoxy-D-xylulose 5-phosphate</name>
        <dbReference type="ChEBI" id="CHEBI:57792"/>
    </ligand>
</feature>
<feature type="binding site" evidence="1">
    <location>
        <position position="231"/>
    </location>
    <ligand>
        <name>Mn(2+)</name>
        <dbReference type="ChEBI" id="CHEBI:29035"/>
    </ligand>
</feature>
<comment type="function">
    <text evidence="1">Catalyzes the NADPH-dependent rearrangement and reduction of 1-deoxy-D-xylulose-5-phosphate (DXP) to 2-C-methyl-D-erythritol 4-phosphate (MEP).</text>
</comment>
<comment type="catalytic activity">
    <reaction evidence="1">
        <text>2-C-methyl-D-erythritol 4-phosphate + NADP(+) = 1-deoxy-D-xylulose 5-phosphate + NADPH + H(+)</text>
        <dbReference type="Rhea" id="RHEA:13717"/>
        <dbReference type="ChEBI" id="CHEBI:15378"/>
        <dbReference type="ChEBI" id="CHEBI:57783"/>
        <dbReference type="ChEBI" id="CHEBI:57792"/>
        <dbReference type="ChEBI" id="CHEBI:58262"/>
        <dbReference type="ChEBI" id="CHEBI:58349"/>
        <dbReference type="EC" id="1.1.1.267"/>
    </reaction>
    <physiologicalReaction direction="right-to-left" evidence="1">
        <dbReference type="Rhea" id="RHEA:13719"/>
    </physiologicalReaction>
</comment>
<comment type="cofactor">
    <cofactor evidence="1">
        <name>Mg(2+)</name>
        <dbReference type="ChEBI" id="CHEBI:18420"/>
    </cofactor>
    <cofactor evidence="1">
        <name>Mn(2+)</name>
        <dbReference type="ChEBI" id="CHEBI:29035"/>
    </cofactor>
</comment>
<comment type="pathway">
    <text evidence="1">Isoprenoid biosynthesis; isopentenyl diphosphate biosynthesis via DXP pathway; isopentenyl diphosphate from 1-deoxy-D-xylulose 5-phosphate: step 1/6.</text>
</comment>
<comment type="similarity">
    <text evidence="1">Belongs to the DXR family.</text>
</comment>
<reference key="1">
    <citation type="journal article" date="2007" name="Genes Dev.">
        <title>New insights into Acinetobacter baumannii pathogenesis revealed by high-density pyrosequencing and transposon mutagenesis.</title>
        <authorList>
            <person name="Smith M.G."/>
            <person name="Gianoulis T.A."/>
            <person name="Pukatzki S."/>
            <person name="Mekalanos J.J."/>
            <person name="Ornston L.N."/>
            <person name="Gerstein M."/>
            <person name="Snyder M."/>
        </authorList>
    </citation>
    <scope>NUCLEOTIDE SEQUENCE [LARGE SCALE GENOMIC DNA]</scope>
    <source>
        <strain>ATCC 17978 / DSM 105126 / CIP 53.77 / LMG 1025 / NCDC KC755 / 5377</strain>
    </source>
</reference>
<gene>
    <name evidence="1" type="primary">dxr</name>
    <name type="ordered locus">A1S_1971</name>
</gene>
<protein>
    <recommendedName>
        <fullName evidence="1">1-deoxy-D-xylulose 5-phosphate reductoisomerase</fullName>
        <shortName evidence="1">DXP reductoisomerase</shortName>
        <ecNumber evidence="1">1.1.1.267</ecNumber>
    </recommendedName>
    <alternativeName>
        <fullName evidence="1">1-deoxyxylulose-5-phosphate reductoisomerase</fullName>
    </alternativeName>
    <alternativeName>
        <fullName evidence="1">2-C-methyl-D-erythritol 4-phosphate synthase</fullName>
    </alternativeName>
</protein>
<sequence length="398" mass="43024">MTQSVCILGVTGSIGRSTLKILGQHPDKYSVFAVSAHSRISELVEICKQFRPKVVVVPEQKIAELKTLFAQQNISDIDVLAGQEGLVDIASHTDVDIVMAAIVGAAGLLPTLAAVKAGKRVLLANKEALVMSGEIMMQAARDHQALLLPVDSEHNAIFQSLPHNYLQADRTGQPQLGVSKILLTASGGPFLNHSLEQLTHVTPQQACKHPNWSMGQKISVDSATLMNKGLELIEACHLFSISEHFVTVVVHPQSIIHSMVQYVDGSTLAQMGNPDMCTPIAHALAWPERLQTNVPALDLFEYSQLNFQAPDTQKFPALNLARQAMRAGGLAPTILNAANEIAVEAFLMERIGFTSIPQVVEHTLEKLENAAAESIECILDKDKVARSVAQQYISSIGG</sequence>